<organism>
    <name type="scientific">Staphylococcus aureus (strain MW2)</name>
    <dbReference type="NCBI Taxonomy" id="196620"/>
    <lineage>
        <taxon>Bacteria</taxon>
        <taxon>Bacillati</taxon>
        <taxon>Bacillota</taxon>
        <taxon>Bacilli</taxon>
        <taxon>Bacillales</taxon>
        <taxon>Staphylococcaceae</taxon>
        <taxon>Staphylococcus</taxon>
    </lineage>
</organism>
<proteinExistence type="inferred from homology"/>
<protein>
    <recommendedName>
        <fullName evidence="1">Adenylosuccinate synthetase</fullName>
        <shortName evidence="1">AMPSase</shortName>
        <shortName evidence="1">AdSS</shortName>
        <ecNumber evidence="1">6.3.4.4</ecNumber>
    </recommendedName>
    <alternativeName>
        <fullName evidence="1">IMP--aspartate ligase</fullName>
    </alternativeName>
</protein>
<gene>
    <name evidence="1" type="primary">purA</name>
    <name type="ordered locus">MW0017</name>
</gene>
<feature type="chain" id="PRO_0000095231" description="Adenylosuccinate synthetase">
    <location>
        <begin position="1"/>
        <end position="427"/>
    </location>
</feature>
<feature type="active site" description="Proton acceptor" evidence="1">
    <location>
        <position position="13"/>
    </location>
</feature>
<feature type="active site" description="Proton donor" evidence="1">
    <location>
        <position position="41"/>
    </location>
</feature>
<feature type="binding site" evidence="1">
    <location>
        <begin position="12"/>
        <end position="18"/>
    </location>
    <ligand>
        <name>GTP</name>
        <dbReference type="ChEBI" id="CHEBI:37565"/>
    </ligand>
</feature>
<feature type="binding site" description="in other chain" evidence="1">
    <location>
        <begin position="13"/>
        <end position="16"/>
    </location>
    <ligand>
        <name>IMP</name>
        <dbReference type="ChEBI" id="CHEBI:58053"/>
        <note>ligand shared between dimeric partners</note>
    </ligand>
</feature>
<feature type="binding site" evidence="1">
    <location>
        <position position="13"/>
    </location>
    <ligand>
        <name>Mg(2+)</name>
        <dbReference type="ChEBI" id="CHEBI:18420"/>
    </ligand>
</feature>
<feature type="binding site" description="in other chain" evidence="1">
    <location>
        <begin position="38"/>
        <end position="41"/>
    </location>
    <ligand>
        <name>IMP</name>
        <dbReference type="ChEBI" id="CHEBI:58053"/>
        <note>ligand shared between dimeric partners</note>
    </ligand>
</feature>
<feature type="binding site" evidence="1">
    <location>
        <begin position="40"/>
        <end position="42"/>
    </location>
    <ligand>
        <name>GTP</name>
        <dbReference type="ChEBI" id="CHEBI:37565"/>
    </ligand>
</feature>
<feature type="binding site" evidence="1">
    <location>
        <position position="40"/>
    </location>
    <ligand>
        <name>Mg(2+)</name>
        <dbReference type="ChEBI" id="CHEBI:18420"/>
    </ligand>
</feature>
<feature type="binding site" description="in other chain" evidence="1">
    <location>
        <position position="128"/>
    </location>
    <ligand>
        <name>IMP</name>
        <dbReference type="ChEBI" id="CHEBI:58053"/>
        <note>ligand shared between dimeric partners</note>
    </ligand>
</feature>
<feature type="binding site" evidence="1">
    <location>
        <position position="142"/>
    </location>
    <ligand>
        <name>IMP</name>
        <dbReference type="ChEBI" id="CHEBI:58053"/>
        <note>ligand shared between dimeric partners</note>
    </ligand>
</feature>
<feature type="binding site" description="in other chain" evidence="1">
    <location>
        <position position="223"/>
    </location>
    <ligand>
        <name>IMP</name>
        <dbReference type="ChEBI" id="CHEBI:58053"/>
        <note>ligand shared between dimeric partners</note>
    </ligand>
</feature>
<feature type="binding site" description="in other chain" evidence="1">
    <location>
        <position position="238"/>
    </location>
    <ligand>
        <name>IMP</name>
        <dbReference type="ChEBI" id="CHEBI:58053"/>
        <note>ligand shared between dimeric partners</note>
    </ligand>
</feature>
<feature type="binding site" evidence="1">
    <location>
        <begin position="298"/>
        <end position="304"/>
    </location>
    <ligand>
        <name>substrate</name>
    </ligand>
</feature>
<feature type="binding site" description="in other chain" evidence="1">
    <location>
        <position position="302"/>
    </location>
    <ligand>
        <name>IMP</name>
        <dbReference type="ChEBI" id="CHEBI:58053"/>
        <note>ligand shared between dimeric partners</note>
    </ligand>
</feature>
<feature type="binding site" evidence="1">
    <location>
        <position position="304"/>
    </location>
    <ligand>
        <name>GTP</name>
        <dbReference type="ChEBI" id="CHEBI:37565"/>
    </ligand>
</feature>
<feature type="binding site" evidence="1">
    <location>
        <begin position="330"/>
        <end position="332"/>
    </location>
    <ligand>
        <name>GTP</name>
        <dbReference type="ChEBI" id="CHEBI:37565"/>
    </ligand>
</feature>
<feature type="binding site" evidence="1">
    <location>
        <begin position="412"/>
        <end position="414"/>
    </location>
    <ligand>
        <name>GTP</name>
        <dbReference type="ChEBI" id="CHEBI:37565"/>
    </ligand>
</feature>
<dbReference type="EC" id="6.3.4.4" evidence="1"/>
<dbReference type="EMBL" id="BA000033">
    <property type="protein sequence ID" value="BAB93882.1"/>
    <property type="molecule type" value="Genomic_DNA"/>
</dbReference>
<dbReference type="RefSeq" id="WP_000095327.1">
    <property type="nucleotide sequence ID" value="NC_003923.1"/>
</dbReference>
<dbReference type="SMR" id="Q8NYX6"/>
<dbReference type="KEGG" id="sam:MW0017"/>
<dbReference type="HOGENOM" id="CLU_029848_0_0_9"/>
<dbReference type="UniPathway" id="UPA00075">
    <property type="reaction ID" value="UER00335"/>
</dbReference>
<dbReference type="GO" id="GO:0005737">
    <property type="term" value="C:cytoplasm"/>
    <property type="evidence" value="ECO:0007669"/>
    <property type="project" value="UniProtKB-SubCell"/>
</dbReference>
<dbReference type="GO" id="GO:0004019">
    <property type="term" value="F:adenylosuccinate synthase activity"/>
    <property type="evidence" value="ECO:0007669"/>
    <property type="project" value="UniProtKB-UniRule"/>
</dbReference>
<dbReference type="GO" id="GO:0005525">
    <property type="term" value="F:GTP binding"/>
    <property type="evidence" value="ECO:0007669"/>
    <property type="project" value="UniProtKB-UniRule"/>
</dbReference>
<dbReference type="GO" id="GO:0000287">
    <property type="term" value="F:magnesium ion binding"/>
    <property type="evidence" value="ECO:0007669"/>
    <property type="project" value="UniProtKB-UniRule"/>
</dbReference>
<dbReference type="GO" id="GO:0044208">
    <property type="term" value="P:'de novo' AMP biosynthetic process"/>
    <property type="evidence" value="ECO:0007669"/>
    <property type="project" value="UniProtKB-UniRule"/>
</dbReference>
<dbReference type="GO" id="GO:0046040">
    <property type="term" value="P:IMP metabolic process"/>
    <property type="evidence" value="ECO:0007669"/>
    <property type="project" value="TreeGrafter"/>
</dbReference>
<dbReference type="CDD" id="cd03108">
    <property type="entry name" value="AdSS"/>
    <property type="match status" value="1"/>
</dbReference>
<dbReference type="FunFam" id="1.10.300.10:FF:000001">
    <property type="entry name" value="Adenylosuccinate synthetase"/>
    <property type="match status" value="1"/>
</dbReference>
<dbReference type="FunFam" id="3.90.170.10:FF:000001">
    <property type="entry name" value="Adenylosuccinate synthetase"/>
    <property type="match status" value="1"/>
</dbReference>
<dbReference type="Gene3D" id="3.40.440.10">
    <property type="entry name" value="Adenylosuccinate Synthetase, subunit A, domain 1"/>
    <property type="match status" value="1"/>
</dbReference>
<dbReference type="Gene3D" id="1.10.300.10">
    <property type="entry name" value="Adenylosuccinate Synthetase, subunit A, domain 2"/>
    <property type="match status" value="1"/>
</dbReference>
<dbReference type="Gene3D" id="3.90.170.10">
    <property type="entry name" value="Adenylosuccinate Synthetase, subunit A, domain 3"/>
    <property type="match status" value="1"/>
</dbReference>
<dbReference type="HAMAP" id="MF_00011">
    <property type="entry name" value="Adenylosucc_synth"/>
    <property type="match status" value="1"/>
</dbReference>
<dbReference type="InterPro" id="IPR018220">
    <property type="entry name" value="Adenylosuccin_syn_GTP-bd"/>
</dbReference>
<dbReference type="InterPro" id="IPR033128">
    <property type="entry name" value="Adenylosuccin_syn_Lys_AS"/>
</dbReference>
<dbReference type="InterPro" id="IPR042109">
    <property type="entry name" value="Adenylosuccinate_synth_dom1"/>
</dbReference>
<dbReference type="InterPro" id="IPR042110">
    <property type="entry name" value="Adenylosuccinate_synth_dom2"/>
</dbReference>
<dbReference type="InterPro" id="IPR042111">
    <property type="entry name" value="Adenylosuccinate_synth_dom3"/>
</dbReference>
<dbReference type="InterPro" id="IPR001114">
    <property type="entry name" value="Adenylosuccinate_synthetase"/>
</dbReference>
<dbReference type="InterPro" id="IPR027417">
    <property type="entry name" value="P-loop_NTPase"/>
</dbReference>
<dbReference type="NCBIfam" id="NF002223">
    <property type="entry name" value="PRK01117.1"/>
    <property type="match status" value="1"/>
</dbReference>
<dbReference type="NCBIfam" id="TIGR00184">
    <property type="entry name" value="purA"/>
    <property type="match status" value="1"/>
</dbReference>
<dbReference type="PANTHER" id="PTHR11846">
    <property type="entry name" value="ADENYLOSUCCINATE SYNTHETASE"/>
    <property type="match status" value="1"/>
</dbReference>
<dbReference type="PANTHER" id="PTHR11846:SF0">
    <property type="entry name" value="ADENYLOSUCCINATE SYNTHETASE"/>
    <property type="match status" value="1"/>
</dbReference>
<dbReference type="Pfam" id="PF00709">
    <property type="entry name" value="Adenylsucc_synt"/>
    <property type="match status" value="1"/>
</dbReference>
<dbReference type="SMART" id="SM00788">
    <property type="entry name" value="Adenylsucc_synt"/>
    <property type="match status" value="1"/>
</dbReference>
<dbReference type="SUPFAM" id="SSF52540">
    <property type="entry name" value="P-loop containing nucleoside triphosphate hydrolases"/>
    <property type="match status" value="1"/>
</dbReference>
<dbReference type="PROSITE" id="PS01266">
    <property type="entry name" value="ADENYLOSUCCIN_SYN_1"/>
    <property type="match status" value="1"/>
</dbReference>
<dbReference type="PROSITE" id="PS00513">
    <property type="entry name" value="ADENYLOSUCCIN_SYN_2"/>
    <property type="match status" value="1"/>
</dbReference>
<comment type="function">
    <text evidence="1">Plays an important role in the de novo pathway of purine nucleotide biosynthesis. Catalyzes the first committed step in the biosynthesis of AMP from IMP.</text>
</comment>
<comment type="catalytic activity">
    <reaction evidence="1">
        <text>IMP + L-aspartate + GTP = N(6)-(1,2-dicarboxyethyl)-AMP + GDP + phosphate + 2 H(+)</text>
        <dbReference type="Rhea" id="RHEA:15753"/>
        <dbReference type="ChEBI" id="CHEBI:15378"/>
        <dbReference type="ChEBI" id="CHEBI:29991"/>
        <dbReference type="ChEBI" id="CHEBI:37565"/>
        <dbReference type="ChEBI" id="CHEBI:43474"/>
        <dbReference type="ChEBI" id="CHEBI:57567"/>
        <dbReference type="ChEBI" id="CHEBI:58053"/>
        <dbReference type="ChEBI" id="CHEBI:58189"/>
        <dbReference type="EC" id="6.3.4.4"/>
    </reaction>
</comment>
<comment type="cofactor">
    <cofactor evidence="1">
        <name>Mg(2+)</name>
        <dbReference type="ChEBI" id="CHEBI:18420"/>
    </cofactor>
    <text evidence="1">Binds 1 Mg(2+) ion per subunit.</text>
</comment>
<comment type="pathway">
    <text evidence="1">Purine metabolism; AMP biosynthesis via de novo pathway; AMP from IMP: step 1/2.</text>
</comment>
<comment type="subunit">
    <text evidence="1">Homodimer.</text>
</comment>
<comment type="subcellular location">
    <subcellularLocation>
        <location evidence="1">Cytoplasm</location>
    </subcellularLocation>
</comment>
<comment type="similarity">
    <text evidence="1">Belongs to the adenylosuccinate synthetase family.</text>
</comment>
<evidence type="ECO:0000255" key="1">
    <source>
        <dbReference type="HAMAP-Rule" id="MF_00011"/>
    </source>
</evidence>
<keyword id="KW-0963">Cytoplasm</keyword>
<keyword id="KW-0342">GTP-binding</keyword>
<keyword id="KW-0436">Ligase</keyword>
<keyword id="KW-0460">Magnesium</keyword>
<keyword id="KW-0479">Metal-binding</keyword>
<keyword id="KW-0547">Nucleotide-binding</keyword>
<keyword id="KW-0658">Purine biosynthesis</keyword>
<sequence>MSSIVVVGTQWGDEGKGKITDFLAEQSDVIARFSGGNNAGHTIQFGGETYKLHLVPSGIFYKDKLAVIGNGVVVDPVALLKELDGLNERGIPTSNLRISNRAQVILPYHLAQDEYEERLRGDNKIGTTKKGIGPAYVDKVQRIGIRMADLLEKETFERLLKSNIEYKQAYFKGMFNETCPSFDDIFEEYYAAGQRLKEFVTDTSKILDDAFVADEKVLFEGAQGVMLDIDHGTYPFVTSSNPIAGNVTVGTGVGPTFVSKVIGVCKAYTSRVGDGPFPTELFDEDGHHIREVGREYGTTTGRPRRVGWFDSVVLRHSRRVSGITDLSINSIDVLTGLDTVKICTAYELDGKEITEYPANLDQLKRCKPIFEELPGWTEDVTNVRTLEELPENARKYLERISELCNVQISIFSVGPDREQTNLLKELW</sequence>
<reference key="1">
    <citation type="journal article" date="2002" name="Lancet">
        <title>Genome and virulence determinants of high virulence community-acquired MRSA.</title>
        <authorList>
            <person name="Baba T."/>
            <person name="Takeuchi F."/>
            <person name="Kuroda M."/>
            <person name="Yuzawa H."/>
            <person name="Aoki K."/>
            <person name="Oguchi A."/>
            <person name="Nagai Y."/>
            <person name="Iwama N."/>
            <person name="Asano K."/>
            <person name="Naimi T."/>
            <person name="Kuroda H."/>
            <person name="Cui L."/>
            <person name="Yamamoto K."/>
            <person name="Hiramatsu K."/>
        </authorList>
    </citation>
    <scope>NUCLEOTIDE SEQUENCE [LARGE SCALE GENOMIC DNA]</scope>
    <source>
        <strain>MW2</strain>
    </source>
</reference>
<name>PURA_STAAW</name>
<accession>Q8NYX6</accession>